<name>PWP2_YEAST</name>
<accession>P25635</accession>
<accession>D6VR63</accession>
<accession>P25633</accession>
<accession>P25636</accession>
<protein>
    <recommendedName>
        <fullName>Periodic tryptophan protein 2</fullName>
    </recommendedName>
    <alternativeName>
        <fullName>U three protein 1</fullName>
    </alternativeName>
    <alternativeName>
        <fullName>U3 small nucleolar RNA-associated protein 1</fullName>
        <shortName>U3 snoRNA-associated protein 1</shortName>
    </alternativeName>
</protein>
<evidence type="ECO:0000256" key="1">
    <source>
        <dbReference type="SAM" id="MobiDB-lite"/>
    </source>
</evidence>
<evidence type="ECO:0000269" key="2">
    <source>
    </source>
</evidence>
<evidence type="ECO:0000269" key="3">
    <source>
    </source>
</evidence>
<evidence type="ECO:0000269" key="4">
    <source>
    </source>
</evidence>
<evidence type="ECO:0000305" key="5"/>
<evidence type="ECO:0007744" key="6">
    <source>
    </source>
</evidence>
<evidence type="ECO:0007744" key="7">
    <source>
    </source>
</evidence>
<evidence type="ECO:0007744" key="8">
    <source>
    </source>
</evidence>
<evidence type="ECO:0007829" key="9">
    <source>
        <dbReference type="PDB" id="5I2T"/>
    </source>
</evidence>
<proteinExistence type="evidence at protein level"/>
<reference key="1">
    <citation type="journal article" date="1996" name="Mol. Gen. Genet.">
        <title>PWP2, a member of the WD-repeat family of proteins, is an essential Saccharomyces cerevisiae gene involved in cell separation.</title>
        <authorList>
            <person name="Shafaatian R."/>
            <person name="Payton M.A."/>
            <person name="Reid J.D."/>
        </authorList>
    </citation>
    <scope>NUCLEOTIDE SEQUENCE [GENOMIC DNA]</scope>
    <scope>FUNCTION</scope>
    <source>
        <strain>ATCC 204511 / S288c / AB972</strain>
    </source>
</reference>
<reference key="2">
    <citation type="journal article" date="1992" name="Nature">
        <title>The complete DNA sequence of yeast chromosome III.</title>
        <authorList>
            <person name="Oliver S.G."/>
            <person name="van der Aart Q.J.M."/>
            <person name="Agostoni-Carbone M.L."/>
            <person name="Aigle M."/>
            <person name="Alberghina L."/>
            <person name="Alexandraki D."/>
            <person name="Antoine G."/>
            <person name="Anwar R."/>
            <person name="Ballesta J.P.G."/>
            <person name="Benit P."/>
            <person name="Berben G."/>
            <person name="Bergantino E."/>
            <person name="Biteau N."/>
            <person name="Bolle P.-A."/>
            <person name="Bolotin-Fukuhara M."/>
            <person name="Brown A."/>
            <person name="Brown A.J.P."/>
            <person name="Buhler J.-M."/>
            <person name="Carcano C."/>
            <person name="Carignani G."/>
            <person name="Cederberg H."/>
            <person name="Chanet R."/>
            <person name="Contreras R."/>
            <person name="Crouzet M."/>
            <person name="Daignan-Fornier B."/>
            <person name="Defoor E."/>
            <person name="Delgado M.D."/>
            <person name="Demolder J."/>
            <person name="Doira C."/>
            <person name="Dubois E."/>
            <person name="Dujon B."/>
            <person name="Duesterhoeft A."/>
            <person name="Erdmann D."/>
            <person name="Esteban M."/>
            <person name="Fabre F."/>
            <person name="Fairhead C."/>
            <person name="Faye G."/>
            <person name="Feldmann H."/>
            <person name="Fiers W."/>
            <person name="Francingues-Gaillard M.-C."/>
            <person name="Franco L."/>
            <person name="Frontali L."/>
            <person name="Fukuhara H."/>
            <person name="Fuller L.J."/>
            <person name="Galland P."/>
            <person name="Gent M.E."/>
            <person name="Gigot D."/>
            <person name="Gilliquet V."/>
            <person name="Glansdorff N."/>
            <person name="Goffeau A."/>
            <person name="Grenson M."/>
            <person name="Grisanti P."/>
            <person name="Grivell L.A."/>
            <person name="de Haan M."/>
            <person name="Haasemann M."/>
            <person name="Hatat D."/>
            <person name="Hoenicka J."/>
            <person name="Hegemann J.H."/>
            <person name="Herbert C.J."/>
            <person name="Hilger F."/>
            <person name="Hohmann S."/>
            <person name="Hollenberg C.P."/>
            <person name="Huse K."/>
            <person name="Iborra F."/>
            <person name="Indge K.J."/>
            <person name="Isono K."/>
            <person name="Jacq C."/>
            <person name="Jacquet M."/>
            <person name="James C.M."/>
            <person name="Jauniaux J.-C."/>
            <person name="Jia Y."/>
            <person name="Jimenez A."/>
            <person name="Kelly A."/>
            <person name="Kleinhans U."/>
            <person name="Kreisl P."/>
            <person name="Lanfranchi G."/>
            <person name="Lewis C."/>
            <person name="van der Linden C.G."/>
            <person name="Lucchini G."/>
            <person name="Lutzenkirchen K."/>
            <person name="Maat M.J."/>
            <person name="Mallet L."/>
            <person name="Mannhaupt G."/>
            <person name="Martegani E."/>
            <person name="Mathieu A."/>
            <person name="Maurer C.T.C."/>
            <person name="McConnell D."/>
            <person name="McKee R.A."/>
            <person name="Messenguy F."/>
            <person name="Mewes H.-W."/>
            <person name="Molemans F."/>
            <person name="Montague M.A."/>
            <person name="Muzi Falconi M."/>
            <person name="Navas L."/>
            <person name="Newlon C.S."/>
            <person name="Noone D."/>
            <person name="Pallier C."/>
            <person name="Panzeri L."/>
            <person name="Pearson B.M."/>
            <person name="Perea J."/>
            <person name="Philippsen P."/>
            <person name="Pierard A."/>
            <person name="Planta R.J."/>
            <person name="Plevani P."/>
            <person name="Poetsch B."/>
            <person name="Pohl F.M."/>
            <person name="Purnelle B."/>
            <person name="Ramezani Rad M."/>
            <person name="Rasmussen S.W."/>
            <person name="Raynal A."/>
            <person name="Remacha M.A."/>
            <person name="Richterich P."/>
            <person name="Roberts A.B."/>
            <person name="Rodriguez F."/>
            <person name="Sanz E."/>
            <person name="Schaaff-Gerstenschlaeger I."/>
            <person name="Scherens B."/>
            <person name="Schweitzer B."/>
            <person name="Shu Y."/>
            <person name="Skala J."/>
            <person name="Slonimski P.P."/>
            <person name="Sor F."/>
            <person name="Soustelle C."/>
            <person name="Spiegelberg R."/>
            <person name="Stateva L.I."/>
            <person name="Steensma H.Y."/>
            <person name="Steiner S."/>
            <person name="Thierry A."/>
            <person name="Thireos G."/>
            <person name="Tzermia M."/>
            <person name="Urrestarazu L.A."/>
            <person name="Valle G."/>
            <person name="Vetter I."/>
            <person name="van Vliet-Reedijk J.C."/>
            <person name="Voet M."/>
            <person name="Volckaert G."/>
            <person name="Vreken P."/>
            <person name="Wang H."/>
            <person name="Warmington J.R."/>
            <person name="von Wettstein D."/>
            <person name="Wicksteed B.L."/>
            <person name="Wilson C."/>
            <person name="Wurst H."/>
            <person name="Xu G."/>
            <person name="Yoshikawa A."/>
            <person name="Zimmermann F.K."/>
            <person name="Sgouros J.G."/>
        </authorList>
    </citation>
    <scope>NUCLEOTIDE SEQUENCE [LARGE SCALE GENOMIC DNA]</scope>
    <source>
        <strain>ATCC 204508 / S288c</strain>
    </source>
</reference>
<reference key="3">
    <citation type="submission" date="1996-01" db="EMBL/GenBank/DDBJ databases">
        <authorList>
            <person name="Gromadka R."/>
        </authorList>
    </citation>
    <scope>SEQUENCE REVISION</scope>
</reference>
<reference key="4">
    <citation type="journal article" date="2014" name="G3 (Bethesda)">
        <title>The reference genome sequence of Saccharomyces cerevisiae: Then and now.</title>
        <authorList>
            <person name="Engel S.R."/>
            <person name="Dietrich F.S."/>
            <person name="Fisk D.G."/>
            <person name="Binkley G."/>
            <person name="Balakrishnan R."/>
            <person name="Costanzo M.C."/>
            <person name="Dwight S.S."/>
            <person name="Hitz B.C."/>
            <person name="Karra K."/>
            <person name="Nash R.S."/>
            <person name="Weng S."/>
            <person name="Wong E.D."/>
            <person name="Lloyd P."/>
            <person name="Skrzypek M.S."/>
            <person name="Miyasato S.R."/>
            <person name="Simison M."/>
            <person name="Cherry J.M."/>
        </authorList>
    </citation>
    <scope>GENOME REANNOTATION</scope>
    <source>
        <strain>ATCC 204508 / S288c</strain>
    </source>
</reference>
<reference key="5">
    <citation type="journal article" date="2002" name="Nature">
        <title>A large nucleolar U3 ribonucleoprotein required for 18S ribosomal RNA biogenesis.</title>
        <authorList>
            <person name="Dragon F."/>
            <person name="Gallagher J.E.G."/>
            <person name="Compagnone-Post P.A."/>
            <person name="Mitchell B.M."/>
            <person name="Porwancher K.A."/>
            <person name="Wehner K.A."/>
            <person name="Wormsley S."/>
            <person name="Settlage R.E."/>
            <person name="Shabanowitz J."/>
            <person name="Osheim Y."/>
            <person name="Beyer A.L."/>
            <person name="Hunt D.F."/>
            <person name="Baserga S.J."/>
        </authorList>
    </citation>
    <scope>FUNCTION</scope>
    <scope>INTERACTION WITH MPP10 AND SNORNA U3</scope>
    <scope>IDENTIFICATION IN SSU PROCESSOME BY MASS SPECTROMETRY</scope>
    <scope>SUBCELLULAR LOCATION</scope>
</reference>
<reference key="6">
    <citation type="journal article" date="2003" name="Nature">
        <title>Global analysis of protein expression in yeast.</title>
        <authorList>
            <person name="Ghaemmaghami S."/>
            <person name="Huh W.-K."/>
            <person name="Bower K."/>
            <person name="Howson R.W."/>
            <person name="Belle A."/>
            <person name="Dephoure N."/>
            <person name="O'Shea E.K."/>
            <person name="Weissman J.S."/>
        </authorList>
    </citation>
    <scope>LEVEL OF PROTEIN EXPRESSION [LARGE SCALE ANALYSIS]</scope>
</reference>
<reference key="7">
    <citation type="journal article" date="2007" name="J. Proteome Res.">
        <title>Large-scale phosphorylation analysis of alpha-factor-arrested Saccharomyces cerevisiae.</title>
        <authorList>
            <person name="Li X."/>
            <person name="Gerber S.A."/>
            <person name="Rudner A.D."/>
            <person name="Beausoleil S.A."/>
            <person name="Haas W."/>
            <person name="Villen J."/>
            <person name="Elias J.E."/>
            <person name="Gygi S.P."/>
        </authorList>
    </citation>
    <scope>PHOSPHORYLATION [LARGE SCALE ANALYSIS] AT SER-232; SER-651; SER-912 AND SER-913</scope>
    <scope>IDENTIFICATION BY MASS SPECTROMETRY [LARGE SCALE ANALYSIS]</scope>
    <source>
        <strain>ADR376</strain>
    </source>
</reference>
<reference key="8">
    <citation type="journal article" date="2008" name="Mol. Cell. Proteomics">
        <title>A multidimensional chromatography technology for in-depth phosphoproteome analysis.</title>
        <authorList>
            <person name="Albuquerque C.P."/>
            <person name="Smolka M.B."/>
            <person name="Payne S.H."/>
            <person name="Bafna V."/>
            <person name="Eng J."/>
            <person name="Zhou H."/>
        </authorList>
    </citation>
    <scope>PHOSPHORYLATION [LARGE SCALE ANALYSIS] AT SER-232; SER-651; SER-664; SER-912 AND SER-913</scope>
    <scope>IDENTIFICATION BY MASS SPECTROMETRY [LARGE SCALE ANALYSIS]</scope>
</reference>
<reference key="9">
    <citation type="journal article" date="2009" name="Science">
        <title>Global analysis of Cdk1 substrate phosphorylation sites provides insights into evolution.</title>
        <authorList>
            <person name="Holt L.J."/>
            <person name="Tuch B.B."/>
            <person name="Villen J."/>
            <person name="Johnson A.D."/>
            <person name="Gygi S.P."/>
            <person name="Morgan D.O."/>
        </authorList>
    </citation>
    <scope>PHOSPHORYLATION [LARGE SCALE ANALYSIS] AT SER-225; SER-232; SER-651; SER-912 AND SER-913</scope>
    <scope>IDENTIFICATION BY MASS SPECTROMETRY [LARGE SCALE ANALYSIS]</scope>
</reference>
<keyword id="KW-0002">3D-structure</keyword>
<keyword id="KW-0539">Nucleus</keyword>
<keyword id="KW-0597">Phosphoprotein</keyword>
<keyword id="KW-1185">Reference proteome</keyword>
<keyword id="KW-0677">Repeat</keyword>
<keyword id="KW-0687">Ribonucleoprotein</keyword>
<keyword id="KW-0690">Ribosome biogenesis</keyword>
<keyword id="KW-0698">rRNA processing</keyword>
<keyword id="KW-0853">WD repeat</keyword>
<sequence>MKSDFKFSNLLGTVYRQGNITFSDDGKQLLSPVGNRVSVFDLINNKSFTFEYEHRKNIAAIDLNKQGTLLISIDEDGRAILVNFKARNVLHHFNFKEKCSAVKFSPDGRLFALASGRFLQIWKTPDVNKDRQFAPFVRHRVHAGHFQDITSLTWSQDSRFILTTSKDLSAKIWSVDSEEKNLAATTFNGHRDYVMGAFFSHDQEKIYTVSKDGAVFVWEFTKRPSDDDDNESEDDDKQEEVDISKYSWRITKKHFFYANQAKVKCVTFHPATRLLAVGFTSGEFRLYDLPDFTLIQQLSMGQNPVNTVSVNQTGEWLAFGSSKLGQLLVYEWQSESYILKQQGHFDSTNSLAYSPDGSRVVTASEDGKIKVWDITSGFCLATFEEHTSSVTAVQFAKRGQVMFSSSLDGTVRAWDLIRYRNFRTFTGTERIQFNCLAVDPSGEVVCAGSLDNFDIHVWSVQTGQLLDALSGHEGPVSCLSFSQENSVLASASWDKTIRIWSIFGRSQQVEPIEVYSDVLALSMRPDGKEVAVSTLKGQISIFNIEDAKQVGNIDCRKDIISGRFNQDRFTAKNSERSKFFTTIHYSFDGMAIVAGGNNNSICLYDVPNEVLLKRFIVSRNMALNGTLEFLNSKKMTEAGSLDLIDDAGENSDLEDRIDNSLPGSQRGGDLSTRKMRPEVRVTSVQFSPTANAFAAASTEGLLIYSTNDTILFDPFDLDVDVTPHSTVEALREKQFLNALVMAFRLNEEYLINKVYEAIPIKEIPLVASNIPAIYLPRILKFIGDFAIESQHIEFNLIWIKALLSASGGYINEHKYLFSTAMRSIQRFIVRVAKEVVNTTTDNKYTYRFLVSTDGSMEDGAADDDEVLLKDDADEDNEENEENDVVMESDDEEGWIGFNGKDNKLPLSNENDSSDEEENEKELP</sequence>
<gene>
    <name type="primary">PWP2</name>
    <name type="synonym">UTP1</name>
    <name type="ordered locus">YCR057C</name>
    <name type="ORF">YCR55C/YCR57C/YCR58C</name>
</gene>
<organism>
    <name type="scientific">Saccharomyces cerevisiae (strain ATCC 204508 / S288c)</name>
    <name type="common">Baker's yeast</name>
    <dbReference type="NCBI Taxonomy" id="559292"/>
    <lineage>
        <taxon>Eukaryota</taxon>
        <taxon>Fungi</taxon>
        <taxon>Dikarya</taxon>
        <taxon>Ascomycota</taxon>
        <taxon>Saccharomycotina</taxon>
        <taxon>Saccharomycetes</taxon>
        <taxon>Saccharomycetales</taxon>
        <taxon>Saccharomycetaceae</taxon>
        <taxon>Saccharomyces</taxon>
    </lineage>
</organism>
<feature type="chain" id="PRO_0000051179" description="Periodic tryptophan protein 2">
    <location>
        <begin position="1"/>
        <end position="923"/>
    </location>
</feature>
<feature type="repeat" description="WD 1">
    <location>
        <begin position="12"/>
        <end position="52"/>
    </location>
</feature>
<feature type="repeat" description="WD 2">
    <location>
        <begin position="53"/>
        <end position="93"/>
    </location>
</feature>
<feature type="repeat" description="WD 3">
    <location>
        <begin position="94"/>
        <end position="132"/>
    </location>
</feature>
<feature type="repeat" description="WD 4">
    <location>
        <begin position="144"/>
        <end position="183"/>
    </location>
</feature>
<feature type="repeat" description="WD 5">
    <location>
        <begin position="189"/>
        <end position="228"/>
    </location>
</feature>
<feature type="repeat" description="WD 6">
    <location>
        <begin position="258"/>
        <end position="297"/>
    </location>
</feature>
<feature type="repeat" description="WD 7">
    <location>
        <begin position="300"/>
        <end position="340"/>
    </location>
</feature>
<feature type="repeat" description="WD 8">
    <location>
        <begin position="343"/>
        <end position="382"/>
    </location>
</feature>
<feature type="repeat" description="WD 9">
    <location>
        <begin position="385"/>
        <end position="424"/>
    </location>
</feature>
<feature type="repeat" description="WD 10">
    <location>
        <begin position="428"/>
        <end position="470"/>
    </location>
</feature>
<feature type="repeat" description="WD 11">
    <location>
        <begin position="471"/>
        <end position="510"/>
    </location>
</feature>
<feature type="repeat" description="WD 12">
    <location>
        <begin position="513"/>
        <end position="552"/>
    </location>
</feature>
<feature type="repeat" description="WD 13">
    <location>
        <begin position="575"/>
        <end position="614"/>
    </location>
</feature>
<feature type="repeat" description="WD 14">
    <location>
        <begin position="676"/>
        <end position="714"/>
    </location>
</feature>
<feature type="region of interest" description="Disordered" evidence="1">
    <location>
        <begin position="653"/>
        <end position="674"/>
    </location>
</feature>
<feature type="region of interest" description="Disordered" evidence="1">
    <location>
        <begin position="869"/>
        <end position="923"/>
    </location>
</feature>
<feature type="compositionally biased region" description="Acidic residues" evidence="1">
    <location>
        <begin position="869"/>
        <end position="893"/>
    </location>
</feature>
<feature type="compositionally biased region" description="Acidic residues" evidence="1">
    <location>
        <begin position="911"/>
        <end position="923"/>
    </location>
</feature>
<feature type="modified residue" description="Phosphoserine" evidence="8">
    <location>
        <position position="225"/>
    </location>
</feature>
<feature type="modified residue" description="Phosphoserine" evidence="6 7 8">
    <location>
        <position position="232"/>
    </location>
</feature>
<feature type="modified residue" description="Phosphoserine" evidence="6 7 8">
    <location>
        <position position="651"/>
    </location>
</feature>
<feature type="modified residue" description="Phosphoserine" evidence="7">
    <location>
        <position position="664"/>
    </location>
</feature>
<feature type="modified residue" description="Phosphoserine" evidence="6 7 8">
    <location>
        <position position="912"/>
    </location>
</feature>
<feature type="modified residue" description="Phosphoserine" evidence="6 7 8">
    <location>
        <position position="913"/>
    </location>
</feature>
<feature type="strand" evidence="9">
    <location>
        <begin position="6"/>
        <end position="11"/>
    </location>
</feature>
<feature type="strand" evidence="9">
    <location>
        <begin position="26"/>
        <end position="32"/>
    </location>
</feature>
<feature type="strand" evidence="9">
    <location>
        <begin position="34"/>
        <end position="41"/>
    </location>
</feature>
<feature type="turn" evidence="9">
    <location>
        <begin position="42"/>
        <end position="45"/>
    </location>
</feature>
<feature type="strand" evidence="9">
    <location>
        <begin position="46"/>
        <end position="49"/>
    </location>
</feature>
<feature type="strand" evidence="9">
    <location>
        <begin position="58"/>
        <end position="63"/>
    </location>
</feature>
<feature type="strand" evidence="9">
    <location>
        <begin position="69"/>
        <end position="74"/>
    </location>
</feature>
<feature type="strand" evidence="9">
    <location>
        <begin position="77"/>
        <end position="83"/>
    </location>
</feature>
<feature type="turn" evidence="9">
    <location>
        <begin position="84"/>
        <end position="86"/>
    </location>
</feature>
<feature type="strand" evidence="9">
    <location>
        <begin position="89"/>
        <end position="94"/>
    </location>
</feature>
<feature type="strand" evidence="9">
    <location>
        <begin position="99"/>
        <end position="104"/>
    </location>
</feature>
<feature type="strand" evidence="9">
    <location>
        <begin position="108"/>
        <end position="115"/>
    </location>
</feature>
<feature type="strand" evidence="9">
    <location>
        <begin position="118"/>
        <end position="123"/>
    </location>
</feature>
<feature type="turn" evidence="9">
    <location>
        <begin position="127"/>
        <end position="129"/>
    </location>
</feature>
<feature type="strand" evidence="9">
    <location>
        <begin position="137"/>
        <end position="142"/>
    </location>
</feature>
<feature type="strand" evidence="9">
    <location>
        <begin position="149"/>
        <end position="154"/>
    </location>
</feature>
<feature type="strand" evidence="9">
    <location>
        <begin position="158"/>
        <end position="165"/>
    </location>
</feature>
<feature type="strand" evidence="9">
    <location>
        <begin position="170"/>
        <end position="174"/>
    </location>
</feature>
<feature type="strand" evidence="9">
    <location>
        <begin position="184"/>
        <end position="187"/>
    </location>
</feature>
<feature type="strand" evidence="9">
    <location>
        <begin position="194"/>
        <end position="199"/>
    </location>
</feature>
<feature type="strand" evidence="9">
    <location>
        <begin position="203"/>
        <end position="210"/>
    </location>
</feature>
<feature type="strand" evidence="9">
    <location>
        <begin position="213"/>
        <end position="220"/>
    </location>
</feature>
<feature type="strand" evidence="9">
    <location>
        <begin position="248"/>
        <end position="255"/>
    </location>
</feature>
<feature type="strand" evidence="9">
    <location>
        <begin position="263"/>
        <end position="269"/>
    </location>
</feature>
<feature type="turn" evidence="9">
    <location>
        <begin position="270"/>
        <end position="273"/>
    </location>
</feature>
<feature type="strand" evidence="9">
    <location>
        <begin position="274"/>
        <end position="288"/>
    </location>
</feature>
<feature type="turn" evidence="9">
    <location>
        <begin position="289"/>
        <end position="292"/>
    </location>
</feature>
<feature type="strand" evidence="9">
    <location>
        <begin position="293"/>
        <end position="300"/>
    </location>
</feature>
<feature type="strand" evidence="9">
    <location>
        <begin position="307"/>
        <end position="310"/>
    </location>
</feature>
<feature type="strand" evidence="9">
    <location>
        <begin position="316"/>
        <end position="321"/>
    </location>
</feature>
<feature type="turn" evidence="9">
    <location>
        <begin position="322"/>
        <end position="325"/>
    </location>
</feature>
<feature type="strand" evidence="9">
    <location>
        <begin position="326"/>
        <end position="331"/>
    </location>
</feature>
<feature type="turn" evidence="9">
    <location>
        <begin position="332"/>
        <end position="335"/>
    </location>
</feature>
<feature type="strand" evidence="9">
    <location>
        <begin position="336"/>
        <end position="341"/>
    </location>
</feature>
<feature type="strand" evidence="9">
    <location>
        <begin position="348"/>
        <end position="353"/>
    </location>
</feature>
<feature type="strand" evidence="9">
    <location>
        <begin position="357"/>
        <end position="364"/>
    </location>
</feature>
<feature type="strand" evidence="9">
    <location>
        <begin position="369"/>
        <end position="373"/>
    </location>
</feature>
<feature type="turn" evidence="9">
    <location>
        <begin position="374"/>
        <end position="376"/>
    </location>
</feature>
<feature type="strand" evidence="9">
    <location>
        <begin position="379"/>
        <end position="383"/>
    </location>
</feature>
<feature type="strand" evidence="9">
    <location>
        <begin position="390"/>
        <end position="396"/>
    </location>
</feature>
<feature type="turn" evidence="9">
    <location>
        <begin position="397"/>
        <end position="400"/>
    </location>
</feature>
<feature type="strand" evidence="9">
    <location>
        <begin position="401"/>
        <end position="406"/>
    </location>
</feature>
<feature type="strand" evidence="9">
    <location>
        <begin position="411"/>
        <end position="415"/>
    </location>
</feature>
<feature type="turn" evidence="9">
    <location>
        <begin position="416"/>
        <end position="419"/>
    </location>
</feature>
<feature type="strand" evidence="9">
    <location>
        <begin position="435"/>
        <end position="438"/>
    </location>
</feature>
<feature type="strand" evidence="9">
    <location>
        <begin position="443"/>
        <end position="448"/>
    </location>
</feature>
<feature type="strand" evidence="9">
    <location>
        <begin position="453"/>
        <end position="459"/>
    </location>
</feature>
<feature type="turn" evidence="9">
    <location>
        <begin position="460"/>
        <end position="462"/>
    </location>
</feature>
<feature type="strand" evidence="9">
    <location>
        <begin position="476"/>
        <end position="481"/>
    </location>
</feature>
<feature type="strand" evidence="9">
    <location>
        <begin position="488"/>
        <end position="492"/>
    </location>
</feature>
<feature type="strand" evidence="9">
    <location>
        <begin position="495"/>
        <end position="500"/>
    </location>
</feature>
<feature type="strand" evidence="9">
    <location>
        <begin position="502"/>
        <end position="504"/>
    </location>
</feature>
<feature type="strand" evidence="9">
    <location>
        <begin position="518"/>
        <end position="523"/>
    </location>
</feature>
<feature type="strand" evidence="9">
    <location>
        <begin position="525"/>
        <end position="543"/>
    </location>
</feature>
<feature type="turn" evidence="9">
    <location>
        <begin position="544"/>
        <end position="547"/>
    </location>
</feature>
<feature type="strand" evidence="9">
    <location>
        <begin position="548"/>
        <end position="554"/>
    </location>
</feature>
<feature type="strand" evidence="9">
    <location>
        <begin position="581"/>
        <end position="585"/>
    </location>
</feature>
<feature type="strand" evidence="9">
    <location>
        <begin position="589"/>
        <end position="595"/>
    </location>
</feature>
<feature type="strand" evidence="9">
    <location>
        <begin position="597"/>
        <end position="605"/>
    </location>
</feature>
<feature type="turn" evidence="9">
    <location>
        <begin position="606"/>
        <end position="609"/>
    </location>
</feature>
<feature type="strand" evidence="9">
    <location>
        <begin position="610"/>
        <end position="616"/>
    </location>
</feature>
<feature type="strand" evidence="9">
    <location>
        <begin position="681"/>
        <end position="686"/>
    </location>
</feature>
<feature type="strand" evidence="9">
    <location>
        <begin position="690"/>
        <end position="697"/>
    </location>
</feature>
<feature type="strand" evidence="9">
    <location>
        <begin position="700"/>
        <end position="705"/>
    </location>
</feature>
<dbReference type="EMBL" id="X78964">
    <property type="protein sequence ID" value="CAA55558.1"/>
    <property type="molecule type" value="Genomic_DNA"/>
</dbReference>
<dbReference type="EMBL" id="X59720">
    <property type="protein sequence ID" value="CAA42286.1"/>
    <property type="molecule type" value="Genomic_DNA"/>
</dbReference>
<dbReference type="EMBL" id="BK006937">
    <property type="protein sequence ID" value="DAA07532.1"/>
    <property type="molecule type" value="Genomic_DNA"/>
</dbReference>
<dbReference type="PIR" id="S44226">
    <property type="entry name" value="S44226"/>
</dbReference>
<dbReference type="RefSeq" id="NP_009984.1">
    <property type="nucleotide sequence ID" value="NM_001178769.1"/>
</dbReference>
<dbReference type="PDB" id="5I2T">
    <property type="method" value="X-ray"/>
    <property type="resolution" value="2.54 A"/>
    <property type="chains" value="A=1-717"/>
</dbReference>
<dbReference type="PDB" id="5WLC">
    <property type="method" value="EM"/>
    <property type="resolution" value="3.80 A"/>
    <property type="chains" value="LO=1-923"/>
</dbReference>
<dbReference type="PDB" id="5WYJ">
    <property type="method" value="EM"/>
    <property type="resolution" value="8.70 A"/>
    <property type="chains" value="BA=1-923"/>
</dbReference>
<dbReference type="PDB" id="5WYK">
    <property type="method" value="EM"/>
    <property type="resolution" value="4.50 A"/>
    <property type="chains" value="BA=1-923"/>
</dbReference>
<dbReference type="PDB" id="6KE6">
    <property type="method" value="EM"/>
    <property type="resolution" value="3.40 A"/>
    <property type="chains" value="B1=1-923"/>
</dbReference>
<dbReference type="PDB" id="6LQP">
    <property type="method" value="EM"/>
    <property type="resolution" value="3.20 A"/>
    <property type="chains" value="B1=1-923"/>
</dbReference>
<dbReference type="PDB" id="6LQQ">
    <property type="method" value="EM"/>
    <property type="resolution" value="4.10 A"/>
    <property type="chains" value="B1=1-923"/>
</dbReference>
<dbReference type="PDB" id="6LQR">
    <property type="method" value="EM"/>
    <property type="resolution" value="8.60 A"/>
    <property type="chains" value="B1=1-923"/>
</dbReference>
<dbReference type="PDB" id="6LQS">
    <property type="method" value="EM"/>
    <property type="resolution" value="3.80 A"/>
    <property type="chains" value="B1=1-900"/>
</dbReference>
<dbReference type="PDB" id="6LQT">
    <property type="method" value="EM"/>
    <property type="resolution" value="4.90 A"/>
    <property type="chains" value="B1=1-923"/>
</dbReference>
<dbReference type="PDB" id="6LQU">
    <property type="method" value="EM"/>
    <property type="resolution" value="3.70 A"/>
    <property type="chains" value="B1=1-923"/>
</dbReference>
<dbReference type="PDB" id="6LQV">
    <property type="method" value="EM"/>
    <property type="resolution" value="4.80 A"/>
    <property type="chains" value="B1=1-923"/>
</dbReference>
<dbReference type="PDB" id="6ND4">
    <property type="method" value="EM"/>
    <property type="resolution" value="4.30 A"/>
    <property type="chains" value="O=1-923"/>
</dbReference>
<dbReference type="PDB" id="6ZQA">
    <property type="method" value="EM"/>
    <property type="resolution" value="4.40 A"/>
    <property type="chains" value="UA=1-923"/>
</dbReference>
<dbReference type="PDB" id="6ZQB">
    <property type="method" value="EM"/>
    <property type="resolution" value="3.90 A"/>
    <property type="chains" value="UA=1-923"/>
</dbReference>
<dbReference type="PDB" id="6ZQC">
    <property type="method" value="EM"/>
    <property type="resolution" value="3.80 A"/>
    <property type="chains" value="UA=1-923"/>
</dbReference>
<dbReference type="PDB" id="6ZQD">
    <property type="method" value="EM"/>
    <property type="resolution" value="3.80 A"/>
    <property type="chains" value="UA=1-923"/>
</dbReference>
<dbReference type="PDB" id="6ZQE">
    <property type="method" value="EM"/>
    <property type="resolution" value="7.10 A"/>
    <property type="chains" value="UA=1-923"/>
</dbReference>
<dbReference type="PDB" id="6ZQF">
    <property type="method" value="EM"/>
    <property type="resolution" value="4.90 A"/>
    <property type="chains" value="UA=1-923"/>
</dbReference>
<dbReference type="PDB" id="7AJT">
    <property type="method" value="EM"/>
    <property type="resolution" value="4.60 A"/>
    <property type="chains" value="UA=1-923"/>
</dbReference>
<dbReference type="PDB" id="7AJU">
    <property type="method" value="EM"/>
    <property type="resolution" value="3.80 A"/>
    <property type="chains" value="UA=1-923"/>
</dbReference>
<dbReference type="PDB" id="7D4I">
    <property type="method" value="EM"/>
    <property type="resolution" value="4.00 A"/>
    <property type="chains" value="B1=1-900"/>
</dbReference>
<dbReference type="PDB" id="7D5S">
    <property type="method" value="EM"/>
    <property type="resolution" value="4.60 A"/>
    <property type="chains" value="B1=1-923"/>
</dbReference>
<dbReference type="PDB" id="7D5T">
    <property type="method" value="EM"/>
    <property type="resolution" value="6.00 A"/>
    <property type="chains" value="B1=1-900"/>
</dbReference>
<dbReference type="PDB" id="7D63">
    <property type="method" value="EM"/>
    <property type="resolution" value="12.30 A"/>
    <property type="chains" value="B1=1-900"/>
</dbReference>
<dbReference type="PDB" id="7SUK">
    <property type="method" value="EM"/>
    <property type="resolution" value="3.99 A"/>
    <property type="chains" value="LO=2-856"/>
</dbReference>
<dbReference type="PDBsum" id="5I2T"/>
<dbReference type="PDBsum" id="5WLC"/>
<dbReference type="PDBsum" id="5WYJ"/>
<dbReference type="PDBsum" id="5WYK"/>
<dbReference type="PDBsum" id="6KE6"/>
<dbReference type="PDBsum" id="6LQP"/>
<dbReference type="PDBsum" id="6LQQ"/>
<dbReference type="PDBsum" id="6LQR"/>
<dbReference type="PDBsum" id="6LQS"/>
<dbReference type="PDBsum" id="6LQT"/>
<dbReference type="PDBsum" id="6LQU"/>
<dbReference type="PDBsum" id="6LQV"/>
<dbReference type="PDBsum" id="6ND4"/>
<dbReference type="PDBsum" id="6ZQA"/>
<dbReference type="PDBsum" id="6ZQB"/>
<dbReference type="PDBsum" id="6ZQC"/>
<dbReference type="PDBsum" id="6ZQD"/>
<dbReference type="PDBsum" id="6ZQE"/>
<dbReference type="PDBsum" id="6ZQF"/>
<dbReference type="PDBsum" id="7AJT"/>
<dbReference type="PDBsum" id="7AJU"/>
<dbReference type="PDBsum" id="7D4I"/>
<dbReference type="PDBsum" id="7D5S"/>
<dbReference type="PDBsum" id="7D5T"/>
<dbReference type="PDBsum" id="7D63"/>
<dbReference type="PDBsum" id="7SUK"/>
<dbReference type="EMDB" id="EMD-0441"/>
<dbReference type="EMDB" id="EMD-0949"/>
<dbReference type="EMDB" id="EMD-0950"/>
<dbReference type="EMDB" id="EMD-0951"/>
<dbReference type="EMDB" id="EMD-0952"/>
<dbReference type="EMDB" id="EMD-0953"/>
<dbReference type="EMDB" id="EMD-0954"/>
<dbReference type="EMDB" id="EMD-0955"/>
<dbReference type="EMDB" id="EMD-11357"/>
<dbReference type="EMDB" id="EMD-11358"/>
<dbReference type="EMDB" id="EMD-11359"/>
<dbReference type="EMDB" id="EMD-11360"/>
<dbReference type="EMDB" id="EMD-11361"/>
<dbReference type="EMDB" id="EMD-11362"/>
<dbReference type="EMDB" id="EMD-11807"/>
<dbReference type="EMDB" id="EMD-11808"/>
<dbReference type="EMDB" id="EMD-25441"/>
<dbReference type="EMDB" id="EMD-30574"/>
<dbReference type="EMDB" id="EMD-30584"/>
<dbReference type="EMDB" id="EMD-30585"/>
<dbReference type="EMDB" id="EMD-30588"/>
<dbReference type="EMDB" id="EMD-6695"/>
<dbReference type="EMDB" id="EMD-6696"/>
<dbReference type="EMDB" id="EMD-8859"/>
<dbReference type="EMDB" id="EMD-9964"/>
<dbReference type="SMR" id="P25635"/>
<dbReference type="BioGRID" id="31035">
    <property type="interactions" value="275"/>
</dbReference>
<dbReference type="ComplexPortal" id="CPX-1410">
    <property type="entry name" value="UTP-B complex"/>
</dbReference>
<dbReference type="DIP" id="DIP-1868N"/>
<dbReference type="FunCoup" id="P25635">
    <property type="interactions" value="1006"/>
</dbReference>
<dbReference type="IntAct" id="P25635">
    <property type="interactions" value="154"/>
</dbReference>
<dbReference type="MINT" id="P25635"/>
<dbReference type="STRING" id="4932.YCR057C"/>
<dbReference type="iPTMnet" id="P25635"/>
<dbReference type="PaxDb" id="4932-YCR057C"/>
<dbReference type="PeptideAtlas" id="P25635"/>
<dbReference type="EnsemblFungi" id="YCR057C_mRNA">
    <property type="protein sequence ID" value="YCR057C"/>
    <property type="gene ID" value="YCR057C"/>
</dbReference>
<dbReference type="GeneID" id="850422"/>
<dbReference type="KEGG" id="sce:YCR057C"/>
<dbReference type="AGR" id="SGD:S000000653"/>
<dbReference type="SGD" id="S000000653">
    <property type="gene designation" value="PWP2"/>
</dbReference>
<dbReference type="VEuPathDB" id="FungiDB:YCR057C"/>
<dbReference type="eggNOG" id="KOG0291">
    <property type="taxonomic scope" value="Eukaryota"/>
</dbReference>
<dbReference type="GeneTree" id="ENSGT00550000074981"/>
<dbReference type="HOGENOM" id="CLU_010458_0_0_1"/>
<dbReference type="InParanoid" id="P25635"/>
<dbReference type="OMA" id="VYEWQSE"/>
<dbReference type="OrthoDB" id="3142434at2759"/>
<dbReference type="BioCyc" id="YEAST:G3O-29363-MONOMER"/>
<dbReference type="Reactome" id="R-SCE-6791226">
    <property type="pathway name" value="Major pathway of rRNA processing in the nucleolus and cytosol"/>
</dbReference>
<dbReference type="BioGRID-ORCS" id="850422">
    <property type="hits" value="9 hits in 10 CRISPR screens"/>
</dbReference>
<dbReference type="CD-CODE" id="BDAE0F88">
    <property type="entry name" value="Nucleolus"/>
</dbReference>
<dbReference type="PRO" id="PR:P25635"/>
<dbReference type="Proteomes" id="UP000002311">
    <property type="component" value="Chromosome III"/>
</dbReference>
<dbReference type="RNAct" id="P25635">
    <property type="molecule type" value="protein"/>
</dbReference>
<dbReference type="GO" id="GO:0030686">
    <property type="term" value="C:90S preribosome"/>
    <property type="evidence" value="ECO:0000314"/>
    <property type="project" value="SGD"/>
</dbReference>
<dbReference type="GO" id="GO:0005737">
    <property type="term" value="C:cytoplasm"/>
    <property type="evidence" value="ECO:0000314"/>
    <property type="project" value="SGD"/>
</dbReference>
<dbReference type="GO" id="GO:0005730">
    <property type="term" value="C:nucleolus"/>
    <property type="evidence" value="ECO:0000314"/>
    <property type="project" value="SGD"/>
</dbReference>
<dbReference type="GO" id="GO:0005654">
    <property type="term" value="C:nucleoplasm"/>
    <property type="evidence" value="ECO:0000304"/>
    <property type="project" value="Reactome"/>
</dbReference>
<dbReference type="GO" id="GO:0034388">
    <property type="term" value="C:Pwp2p-containing subcomplex of 90S preribosome"/>
    <property type="evidence" value="ECO:0000314"/>
    <property type="project" value="SGD"/>
</dbReference>
<dbReference type="GO" id="GO:0032040">
    <property type="term" value="C:small-subunit processome"/>
    <property type="evidence" value="ECO:0000314"/>
    <property type="project" value="SGD"/>
</dbReference>
<dbReference type="GO" id="GO:0003729">
    <property type="term" value="F:mRNA binding"/>
    <property type="evidence" value="ECO:0007005"/>
    <property type="project" value="SGD"/>
</dbReference>
<dbReference type="GO" id="GO:0000480">
    <property type="term" value="P:endonucleolytic cleavage in 5'-ETS of tricistronic rRNA transcript (SSU-rRNA, 5.8S rRNA, LSU-rRNA)"/>
    <property type="evidence" value="ECO:0000315"/>
    <property type="project" value="SGD"/>
</dbReference>
<dbReference type="GO" id="GO:0000447">
    <property type="term" value="P:endonucleolytic cleavage in ITS1 to separate SSU-rRNA from 5.8S rRNA and LSU-rRNA from tricistronic rRNA transcript (SSU-rRNA, 5.8S rRNA, LSU-rRNA)"/>
    <property type="evidence" value="ECO:0000315"/>
    <property type="project" value="SGD"/>
</dbReference>
<dbReference type="GO" id="GO:0000472">
    <property type="term" value="P:endonucleolytic cleavage to generate mature 5'-end of SSU-rRNA from (SSU-rRNA, 5.8S rRNA, LSU-rRNA)"/>
    <property type="evidence" value="ECO:0000315"/>
    <property type="project" value="SGD"/>
</dbReference>
<dbReference type="GO" id="GO:0030010">
    <property type="term" value="P:establishment of cell polarity"/>
    <property type="evidence" value="ECO:0000315"/>
    <property type="project" value="SGD"/>
</dbReference>
<dbReference type="GO" id="GO:0030490">
    <property type="term" value="P:maturation of SSU-rRNA"/>
    <property type="evidence" value="ECO:0000303"/>
    <property type="project" value="ComplexPortal"/>
</dbReference>
<dbReference type="GO" id="GO:0000462">
    <property type="term" value="P:maturation of SSU-rRNA from tricistronic rRNA transcript (SSU-rRNA, 5.8S rRNA, LSU-rRNA)"/>
    <property type="evidence" value="ECO:0000315"/>
    <property type="project" value="SGD"/>
</dbReference>
<dbReference type="GO" id="GO:0000028">
    <property type="term" value="P:ribosomal small subunit assembly"/>
    <property type="evidence" value="ECO:0000318"/>
    <property type="project" value="GO_Central"/>
</dbReference>
<dbReference type="GO" id="GO:0000920">
    <property type="term" value="P:septum digestion after cytokinesis"/>
    <property type="evidence" value="ECO:0000315"/>
    <property type="project" value="SGD"/>
</dbReference>
<dbReference type="CDD" id="cd00200">
    <property type="entry name" value="WD40"/>
    <property type="match status" value="1"/>
</dbReference>
<dbReference type="FunFam" id="2.130.10.10:FF:000219">
    <property type="entry name" value="Periodic tryptophan protein 2"/>
    <property type="match status" value="1"/>
</dbReference>
<dbReference type="FunFam" id="2.130.10.10:FF:000602">
    <property type="entry name" value="Periodic tryptophan protein 2"/>
    <property type="match status" value="1"/>
</dbReference>
<dbReference type="Gene3D" id="2.130.10.10">
    <property type="entry name" value="YVTN repeat-like/Quinoprotein amine dehydrogenase"/>
    <property type="match status" value="3"/>
</dbReference>
<dbReference type="InterPro" id="IPR024977">
    <property type="entry name" value="Apc4-like_WD40_dom"/>
</dbReference>
<dbReference type="InterPro" id="IPR020472">
    <property type="entry name" value="G-protein_beta_WD-40_rep"/>
</dbReference>
<dbReference type="InterPro" id="IPR027145">
    <property type="entry name" value="PWP2"/>
</dbReference>
<dbReference type="InterPro" id="IPR011047">
    <property type="entry name" value="Quinoprotein_ADH-like_sf"/>
</dbReference>
<dbReference type="InterPro" id="IPR007148">
    <property type="entry name" value="SSU_processome_Utp12"/>
</dbReference>
<dbReference type="InterPro" id="IPR015943">
    <property type="entry name" value="WD40/YVTN_repeat-like_dom_sf"/>
</dbReference>
<dbReference type="InterPro" id="IPR019775">
    <property type="entry name" value="WD40_repeat_CS"/>
</dbReference>
<dbReference type="InterPro" id="IPR036322">
    <property type="entry name" value="WD40_repeat_dom_sf"/>
</dbReference>
<dbReference type="InterPro" id="IPR001680">
    <property type="entry name" value="WD40_rpt"/>
</dbReference>
<dbReference type="PANTHER" id="PTHR19858:SF0">
    <property type="entry name" value="PERIODIC TRYPTOPHAN PROTEIN 2 HOMOLOG"/>
    <property type="match status" value="1"/>
</dbReference>
<dbReference type="PANTHER" id="PTHR19858">
    <property type="entry name" value="WD40 REPEAT PROTEIN"/>
    <property type="match status" value="1"/>
</dbReference>
<dbReference type="Pfam" id="PF12894">
    <property type="entry name" value="ANAPC4_WD40"/>
    <property type="match status" value="1"/>
</dbReference>
<dbReference type="Pfam" id="PF04003">
    <property type="entry name" value="Utp12"/>
    <property type="match status" value="1"/>
</dbReference>
<dbReference type="Pfam" id="PF00400">
    <property type="entry name" value="WD40"/>
    <property type="match status" value="5"/>
</dbReference>
<dbReference type="PRINTS" id="PR00320">
    <property type="entry name" value="GPROTEINBRPT"/>
</dbReference>
<dbReference type="SMART" id="SM00320">
    <property type="entry name" value="WD40"/>
    <property type="match status" value="13"/>
</dbReference>
<dbReference type="SUPFAM" id="SSF50998">
    <property type="entry name" value="Quinoprotein alcohol dehydrogenase-like"/>
    <property type="match status" value="1"/>
</dbReference>
<dbReference type="SUPFAM" id="SSF50978">
    <property type="entry name" value="WD40 repeat-like"/>
    <property type="match status" value="2"/>
</dbReference>
<dbReference type="PROSITE" id="PS00678">
    <property type="entry name" value="WD_REPEATS_1"/>
    <property type="match status" value="3"/>
</dbReference>
<dbReference type="PROSITE" id="PS50082">
    <property type="entry name" value="WD_REPEATS_2"/>
    <property type="match status" value="5"/>
</dbReference>
<dbReference type="PROSITE" id="PS50294">
    <property type="entry name" value="WD_REPEATS_REGION"/>
    <property type="match status" value="1"/>
</dbReference>
<comment type="function">
    <text evidence="2 4">Required for bud-site selection and cell separation. Also involved in nucleolar processing of pre-18S ribosomal RNA.</text>
</comment>
<comment type="subunit">
    <text evidence="2">Interacts with snoRNA U3. Interacts with MPP10. Component of the ribosomal small subunit (SSU) processome composed of at least 40 protein subunits and snoRNA U3.</text>
</comment>
<comment type="interaction">
    <interactant intactId="EBI-14332">
        <id>P25635</id>
    </interactant>
    <interactant intactId="EBI-5896">
        <id>Q12220</id>
        <label>DIP2</label>
    </interactant>
    <organismsDiffer>false</organismsDiffer>
    <experiments>12</experiments>
</comment>
<comment type="interaction">
    <interactant intactId="EBI-14332">
        <id>P25635</id>
    </interactant>
    <interactant intactId="EBI-31770">
        <id>Q12481</id>
        <label>RRP36</label>
    </interactant>
    <organismsDiffer>false</organismsDiffer>
    <experiments>2</experiments>
</comment>
<comment type="interaction">
    <interactant intactId="EBI-14332">
        <id>P25635</id>
    </interactant>
    <interactant intactId="EBI-4534">
        <id>P40362</id>
        <label>UTP18</label>
    </interactant>
    <organismsDiffer>false</organismsDiffer>
    <experiments>15</experiments>
</comment>
<comment type="interaction">
    <interactant intactId="EBI-14332">
        <id>P25635</id>
    </interactant>
    <interactant intactId="EBI-359">
        <id>Q06078</id>
        <label>UTP21</label>
    </interactant>
    <organismsDiffer>false</organismsDiffer>
    <experiments>16</experiments>
</comment>
<comment type="subcellular location">
    <subcellularLocation>
        <location evidence="2">Nucleus</location>
        <location evidence="2">Nucleolus</location>
    </subcellularLocation>
</comment>
<comment type="miscellaneous">
    <text evidence="3">Present with 16700 molecules/cell in log phase SD medium.</text>
</comment>
<comment type="similarity">
    <text evidence="5">Belongs to the WD repeat PWP2 family.</text>
</comment>